<sequence>MADAIEIEEMMLEDRDIAVVLEVPTRRRRSRERDYRDRRDDSYDDRARRRREDSTDSWSRSRGDENRGQTPRSDSGAKVHDAPKASAPAAQTEEQKKAERLAKLEAWKKKMAEDKERKEKELAAGGTRKLLDDIDQKANGSSSQPSPNTPTTPSTSAISGDLAPTNYAGKFDPKAIAKKAVASSSSAHALGRDLPLKELSKTSATLTSTVKGLQADKKPTAFNSTSKVSALPKTRGNLSVFGLGAKVTDNEKTYQKRALDFDEDEGSRKKLEKLPTLPMANSKEDDAALANGIEGQDDDDDAELEAAGTEEEAAAAARAAAEKREERLQEAESQPHTNGDVHMEDAPQADSTAMDEDEEIDPLDAFMEEMGDPFSLPKSNTTFVKNNTKSQPQEPEALFGDDDVDLKALDADPDEILAIANKARKKKDIPTINYANLNLPPFRKNFYTEPAELVDMTEAEINDLRLELDGIKVAGKDVPKPVQKWSQCGLDVKSLDVIKKLGYDKPTSIQMQAIPAIMSGRDVIGVAKTGSGKTIAFLLPMFRHIRDQRPLKNSDGPIGLIMTPTRELATQIHKECKPFLKAMGLRAVCAYGGAIIKDQIADLKRGAEIIVCTPGRMIELLAANSGRVTNLQRVTYVVLDEADRMFDMGFEPQVMKVFNNIRPNRQTILFSATMPRIMDALAKKTLQSPVEIVVGGRSVVAPEITQIVEVREEKEKFHRLLELLGELYNADEDARTLIFVDRQEKADDLLKDLMRKGYPCMSIHGGKDQVDRDSTIDDFKAGVVPIMIATSVAARGLDVKQLKLVVNFDAPNHLEDYVHRAGRTGRAGNTGTAVTFITEEQEQYSVGIAKALEQSGQEVPERLNEMRKSYKDKVKSGAKKESSGFGGKGLERFDAEREATKARERKIHKLNGDDDEEEKEEKDDDVLLKAASVVQPASASTAPPKLLGVPKGIDLDGDIKVHRTETAASSSGSKNPLDKVTSAIDAINARLNKTGQLRSGVPIDNKGPDAGAFHATLEINDFPQKARWAVTNRTNVAKILEATGTSITTKGSFYPAGKEVQAGGDPKLYILVEGDTEVVVTNAMRELMRLLKEGTMAAADAEGRAPASGRYTVT</sequence>
<gene>
    <name type="primary">prp5</name>
    <name type="ORF">SS1G_06839</name>
</gene>
<organism>
    <name type="scientific">Sclerotinia sclerotiorum (strain ATCC 18683 / 1980 / Ss-1)</name>
    <name type="common">White mold</name>
    <name type="synonym">Whetzelinia sclerotiorum</name>
    <dbReference type="NCBI Taxonomy" id="665079"/>
    <lineage>
        <taxon>Eukaryota</taxon>
        <taxon>Fungi</taxon>
        <taxon>Dikarya</taxon>
        <taxon>Ascomycota</taxon>
        <taxon>Pezizomycotina</taxon>
        <taxon>Leotiomycetes</taxon>
        <taxon>Helotiales</taxon>
        <taxon>Sclerotiniaceae</taxon>
        <taxon>Sclerotinia</taxon>
    </lineage>
</organism>
<keyword id="KW-0067">ATP-binding</keyword>
<keyword id="KW-0347">Helicase</keyword>
<keyword id="KW-0378">Hydrolase</keyword>
<keyword id="KW-0507">mRNA processing</keyword>
<keyword id="KW-0508">mRNA splicing</keyword>
<keyword id="KW-0547">Nucleotide-binding</keyword>
<keyword id="KW-0539">Nucleus</keyword>
<keyword id="KW-1185">Reference proteome</keyword>
<accession>A7ENE0</accession>
<dbReference type="EC" id="3.6.4.13"/>
<dbReference type="EMBL" id="CH476628">
    <property type="protein sequence ID" value="EDO04356.1"/>
    <property type="molecule type" value="Genomic_DNA"/>
</dbReference>
<dbReference type="RefSeq" id="XP_001592598.1">
    <property type="nucleotide sequence ID" value="XM_001592548.1"/>
</dbReference>
<dbReference type="SMR" id="A7ENE0"/>
<dbReference type="FunCoup" id="A7ENE0">
    <property type="interactions" value="978"/>
</dbReference>
<dbReference type="STRING" id="665079.A7ENE0"/>
<dbReference type="GeneID" id="5488511"/>
<dbReference type="KEGG" id="ssl:SS1G_06839"/>
<dbReference type="InParanoid" id="A7ENE0"/>
<dbReference type="OMA" id="QLPMKKW"/>
<dbReference type="Proteomes" id="UP000001312">
    <property type="component" value="Unassembled WGS sequence"/>
</dbReference>
<dbReference type="GO" id="GO:0005634">
    <property type="term" value="C:nucleus"/>
    <property type="evidence" value="ECO:0000318"/>
    <property type="project" value="GO_Central"/>
</dbReference>
<dbReference type="GO" id="GO:0005524">
    <property type="term" value="F:ATP binding"/>
    <property type="evidence" value="ECO:0007669"/>
    <property type="project" value="UniProtKB-KW"/>
</dbReference>
<dbReference type="GO" id="GO:0016887">
    <property type="term" value="F:ATP hydrolysis activity"/>
    <property type="evidence" value="ECO:0007669"/>
    <property type="project" value="RHEA"/>
</dbReference>
<dbReference type="GO" id="GO:0003676">
    <property type="term" value="F:nucleic acid binding"/>
    <property type="evidence" value="ECO:0007669"/>
    <property type="project" value="InterPro"/>
</dbReference>
<dbReference type="GO" id="GO:0003724">
    <property type="term" value="F:RNA helicase activity"/>
    <property type="evidence" value="ECO:0007669"/>
    <property type="project" value="UniProtKB-EC"/>
</dbReference>
<dbReference type="GO" id="GO:0000398">
    <property type="term" value="P:mRNA splicing, via spliceosome"/>
    <property type="evidence" value="ECO:0000318"/>
    <property type="project" value="GO_Central"/>
</dbReference>
<dbReference type="CDD" id="cd17953">
    <property type="entry name" value="DEADc_DDX46"/>
    <property type="match status" value="1"/>
</dbReference>
<dbReference type="CDD" id="cd18787">
    <property type="entry name" value="SF2_C_DEAD"/>
    <property type="match status" value="1"/>
</dbReference>
<dbReference type="FunFam" id="3.40.50.300:FF:000008">
    <property type="entry name" value="ATP-dependent RNA helicase RhlB"/>
    <property type="match status" value="1"/>
</dbReference>
<dbReference type="FunFam" id="3.40.50.300:FF:000079">
    <property type="entry name" value="probable ATP-dependent RNA helicase DDX17"/>
    <property type="match status" value="1"/>
</dbReference>
<dbReference type="Gene3D" id="3.40.50.300">
    <property type="entry name" value="P-loop containing nucleotide triphosphate hydrolases"/>
    <property type="match status" value="2"/>
</dbReference>
<dbReference type="InterPro" id="IPR011545">
    <property type="entry name" value="DEAD/DEAH_box_helicase_dom"/>
</dbReference>
<dbReference type="InterPro" id="IPR014001">
    <property type="entry name" value="Helicase_ATP-bd"/>
</dbReference>
<dbReference type="InterPro" id="IPR001650">
    <property type="entry name" value="Helicase_C-like"/>
</dbReference>
<dbReference type="InterPro" id="IPR027417">
    <property type="entry name" value="P-loop_NTPase"/>
</dbReference>
<dbReference type="InterPro" id="IPR056149">
    <property type="entry name" value="PRP5/DDX46/KHDC4_KH"/>
</dbReference>
<dbReference type="InterPro" id="IPR000629">
    <property type="entry name" value="RNA-helicase_DEAD-box_CS"/>
</dbReference>
<dbReference type="InterPro" id="IPR014014">
    <property type="entry name" value="RNA_helicase_DEAD_Q_motif"/>
</dbReference>
<dbReference type="PANTHER" id="PTHR47958">
    <property type="entry name" value="ATP-DEPENDENT RNA HELICASE DBP3"/>
    <property type="match status" value="1"/>
</dbReference>
<dbReference type="Pfam" id="PF00270">
    <property type="entry name" value="DEAD"/>
    <property type="match status" value="1"/>
</dbReference>
<dbReference type="Pfam" id="PF00271">
    <property type="entry name" value="Helicase_C"/>
    <property type="match status" value="1"/>
</dbReference>
<dbReference type="Pfam" id="PF23469">
    <property type="entry name" value="KH_12"/>
    <property type="match status" value="1"/>
</dbReference>
<dbReference type="SMART" id="SM00487">
    <property type="entry name" value="DEXDc"/>
    <property type="match status" value="1"/>
</dbReference>
<dbReference type="SMART" id="SM00490">
    <property type="entry name" value="HELICc"/>
    <property type="match status" value="1"/>
</dbReference>
<dbReference type="SUPFAM" id="SSF52540">
    <property type="entry name" value="P-loop containing nucleoside triphosphate hydrolases"/>
    <property type="match status" value="1"/>
</dbReference>
<dbReference type="PROSITE" id="PS00039">
    <property type="entry name" value="DEAD_ATP_HELICASE"/>
    <property type="match status" value="1"/>
</dbReference>
<dbReference type="PROSITE" id="PS51192">
    <property type="entry name" value="HELICASE_ATP_BIND_1"/>
    <property type="match status" value="1"/>
</dbReference>
<dbReference type="PROSITE" id="PS51194">
    <property type="entry name" value="HELICASE_CTER"/>
    <property type="match status" value="1"/>
</dbReference>
<dbReference type="PROSITE" id="PS51195">
    <property type="entry name" value="Q_MOTIF"/>
    <property type="match status" value="1"/>
</dbReference>
<protein>
    <recommendedName>
        <fullName>Pre-mRNA-processing ATP-dependent RNA helicase prp5</fullName>
        <ecNumber>3.6.4.13</ecNumber>
    </recommendedName>
</protein>
<reference key="1">
    <citation type="journal article" date="2011" name="PLoS Genet.">
        <title>Genomic analysis of the necrotrophic fungal pathogens Sclerotinia sclerotiorum and Botrytis cinerea.</title>
        <authorList>
            <person name="Amselem J."/>
            <person name="Cuomo C.A."/>
            <person name="van Kan J.A.L."/>
            <person name="Viaud M."/>
            <person name="Benito E.P."/>
            <person name="Couloux A."/>
            <person name="Coutinho P.M."/>
            <person name="de Vries R.P."/>
            <person name="Dyer P.S."/>
            <person name="Fillinger S."/>
            <person name="Fournier E."/>
            <person name="Gout L."/>
            <person name="Hahn M."/>
            <person name="Kohn L."/>
            <person name="Lapalu N."/>
            <person name="Plummer K.M."/>
            <person name="Pradier J.-M."/>
            <person name="Quevillon E."/>
            <person name="Sharon A."/>
            <person name="Simon A."/>
            <person name="ten Have A."/>
            <person name="Tudzynski B."/>
            <person name="Tudzynski P."/>
            <person name="Wincker P."/>
            <person name="Andrew M."/>
            <person name="Anthouard V."/>
            <person name="Beever R.E."/>
            <person name="Beffa R."/>
            <person name="Benoit I."/>
            <person name="Bouzid O."/>
            <person name="Brault B."/>
            <person name="Chen Z."/>
            <person name="Choquer M."/>
            <person name="Collemare J."/>
            <person name="Cotton P."/>
            <person name="Danchin E.G."/>
            <person name="Da Silva C."/>
            <person name="Gautier A."/>
            <person name="Giraud C."/>
            <person name="Giraud T."/>
            <person name="Gonzalez C."/>
            <person name="Grossetete S."/>
            <person name="Gueldener U."/>
            <person name="Henrissat B."/>
            <person name="Howlett B.J."/>
            <person name="Kodira C."/>
            <person name="Kretschmer M."/>
            <person name="Lappartient A."/>
            <person name="Leroch M."/>
            <person name="Levis C."/>
            <person name="Mauceli E."/>
            <person name="Neuveglise C."/>
            <person name="Oeser B."/>
            <person name="Pearson M."/>
            <person name="Poulain J."/>
            <person name="Poussereau N."/>
            <person name="Quesneville H."/>
            <person name="Rascle C."/>
            <person name="Schumacher J."/>
            <person name="Segurens B."/>
            <person name="Sexton A."/>
            <person name="Silva E."/>
            <person name="Sirven C."/>
            <person name="Soanes D.M."/>
            <person name="Talbot N.J."/>
            <person name="Templeton M."/>
            <person name="Yandava C."/>
            <person name="Yarden O."/>
            <person name="Zeng Q."/>
            <person name="Rollins J.A."/>
            <person name="Lebrun M.-H."/>
            <person name="Dickman M."/>
        </authorList>
    </citation>
    <scope>NUCLEOTIDE SEQUENCE [LARGE SCALE GENOMIC DNA]</scope>
    <source>
        <strain>ATCC 18683 / 1980 / Ss-1</strain>
    </source>
</reference>
<evidence type="ECO:0000250" key="1"/>
<evidence type="ECO:0000255" key="2">
    <source>
        <dbReference type="PROSITE-ProRule" id="PRU00541"/>
    </source>
</evidence>
<evidence type="ECO:0000255" key="3">
    <source>
        <dbReference type="PROSITE-ProRule" id="PRU00542"/>
    </source>
</evidence>
<evidence type="ECO:0000256" key="4">
    <source>
        <dbReference type="SAM" id="MobiDB-lite"/>
    </source>
</evidence>
<evidence type="ECO:0000305" key="5"/>
<name>PRP5_SCLS1</name>
<comment type="function">
    <text evidence="1">ATP-dependent RNA helicase involved spliceosome assembly and in nuclear splicing. Catalyzes an ATP-dependent conformational change of U2 snRNP. Bridges U1 and U2 snRNPs and enables stable U2 snRNP association with intron RNA (By similarity).</text>
</comment>
<comment type="catalytic activity">
    <reaction>
        <text>ATP + H2O = ADP + phosphate + H(+)</text>
        <dbReference type="Rhea" id="RHEA:13065"/>
        <dbReference type="ChEBI" id="CHEBI:15377"/>
        <dbReference type="ChEBI" id="CHEBI:15378"/>
        <dbReference type="ChEBI" id="CHEBI:30616"/>
        <dbReference type="ChEBI" id="CHEBI:43474"/>
        <dbReference type="ChEBI" id="CHEBI:456216"/>
        <dbReference type="EC" id="3.6.4.13"/>
    </reaction>
</comment>
<comment type="subcellular location">
    <subcellularLocation>
        <location evidence="1">Nucleus</location>
    </subcellularLocation>
</comment>
<comment type="domain">
    <text>The Q motif is unique to and characteristic of the DEAD box family of RNA helicases and controls ATP binding and hydrolysis.</text>
</comment>
<comment type="similarity">
    <text evidence="5">Belongs to the DEAD box helicase family. DDX46/PRP5 subfamily.</text>
</comment>
<proteinExistence type="inferred from homology"/>
<feature type="chain" id="PRO_0000310227" description="Pre-mRNA-processing ATP-dependent RNA helicase prp5">
    <location>
        <begin position="1"/>
        <end position="1114"/>
    </location>
</feature>
<feature type="domain" description="Helicase ATP-binding" evidence="2">
    <location>
        <begin position="514"/>
        <end position="692"/>
    </location>
</feature>
<feature type="domain" description="Helicase C-terminal" evidence="3">
    <location>
        <begin position="703"/>
        <end position="867"/>
    </location>
</feature>
<feature type="region of interest" description="Disordered" evidence="4">
    <location>
        <begin position="20"/>
        <end position="168"/>
    </location>
</feature>
<feature type="region of interest" description="Disordered" evidence="4">
    <location>
        <begin position="181"/>
        <end position="200"/>
    </location>
</feature>
<feature type="region of interest" description="Disordered" evidence="4">
    <location>
        <begin position="257"/>
        <end position="356"/>
    </location>
</feature>
<feature type="region of interest" description="Disordered" evidence="4">
    <location>
        <begin position="869"/>
        <end position="924"/>
    </location>
</feature>
<feature type="short sequence motif" description="Q motif">
    <location>
        <begin position="483"/>
        <end position="511"/>
    </location>
</feature>
<feature type="short sequence motif" description="DEAD box">
    <location>
        <begin position="640"/>
        <end position="643"/>
    </location>
</feature>
<feature type="compositionally biased region" description="Basic and acidic residues" evidence="4">
    <location>
        <begin position="31"/>
        <end position="67"/>
    </location>
</feature>
<feature type="compositionally biased region" description="Basic and acidic residues" evidence="4">
    <location>
        <begin position="93"/>
        <end position="122"/>
    </location>
</feature>
<feature type="compositionally biased region" description="Low complexity" evidence="4">
    <location>
        <begin position="141"/>
        <end position="156"/>
    </location>
</feature>
<feature type="compositionally biased region" description="Basic and acidic residues" evidence="4">
    <location>
        <begin position="190"/>
        <end position="200"/>
    </location>
</feature>
<feature type="compositionally biased region" description="Basic and acidic residues" evidence="4">
    <location>
        <begin position="257"/>
        <end position="273"/>
    </location>
</feature>
<feature type="compositionally biased region" description="Acidic residues" evidence="4">
    <location>
        <begin position="295"/>
        <end position="313"/>
    </location>
</feature>
<feature type="compositionally biased region" description="Basic and acidic residues" evidence="4">
    <location>
        <begin position="320"/>
        <end position="330"/>
    </location>
</feature>
<feature type="compositionally biased region" description="Basic and acidic residues" evidence="4">
    <location>
        <begin position="869"/>
        <end position="882"/>
    </location>
</feature>
<feature type="compositionally biased region" description="Basic and acidic residues" evidence="4">
    <location>
        <begin position="889"/>
        <end position="902"/>
    </location>
</feature>
<feature type="compositionally biased region" description="Acidic residues" evidence="4">
    <location>
        <begin position="913"/>
        <end position="924"/>
    </location>
</feature>
<feature type="binding site" evidence="2">
    <location>
        <begin position="527"/>
        <end position="534"/>
    </location>
    <ligand>
        <name>ATP</name>
        <dbReference type="ChEBI" id="CHEBI:30616"/>
    </ligand>
</feature>